<accession>Q99KR3</accession>
<gene>
    <name type="primary">Lactb2</name>
</gene>
<sequence>MAAALQRIEQLSSRVVRVLGCNPGPMTLQGTNTYLVGTGSRRILIDTGEPSVPEYISCLKQALVEFDTAIQEILVTHWHSDHSGGIVDICKNINNDTTYCIKKLRRNPQREEIIGNGEQQFIYIENGDVVKTEGATLRVLYTPGHTDDHMALLLEEENAIFSGDCILGEGTTIFEDLYDYMNSLNNLLKIKANIIYPGHGPVIHNAEAKILEYISHRNNREEQIISLFRDNFEKSFTVTELRTMIYKDVPENLHKMAEHNLLLHLRKLEKDGKIFYTTTPVKKWKAVL</sequence>
<dbReference type="EC" id="3.1.27.-" evidence="1"/>
<dbReference type="EMBL" id="AK088932">
    <property type="protein sequence ID" value="BAC40659.1"/>
    <property type="molecule type" value="mRNA"/>
</dbReference>
<dbReference type="EMBL" id="AK143912">
    <property type="protein sequence ID" value="BAE25598.1"/>
    <property type="molecule type" value="mRNA"/>
</dbReference>
<dbReference type="EMBL" id="BC004045">
    <property type="protein sequence ID" value="AAH04045.1"/>
    <property type="molecule type" value="mRNA"/>
</dbReference>
<dbReference type="CCDS" id="CCDS14823.1"/>
<dbReference type="RefSeq" id="NP_663356.1">
    <property type="nucleotide sequence ID" value="NM_145381.3"/>
</dbReference>
<dbReference type="SMR" id="Q99KR3"/>
<dbReference type="BioGRID" id="229325">
    <property type="interactions" value="1"/>
</dbReference>
<dbReference type="FunCoup" id="Q99KR3">
    <property type="interactions" value="2377"/>
</dbReference>
<dbReference type="STRING" id="10090.ENSMUSP00000027071"/>
<dbReference type="iPTMnet" id="Q99KR3"/>
<dbReference type="PhosphoSitePlus" id="Q99KR3"/>
<dbReference type="SwissPalm" id="Q99KR3"/>
<dbReference type="jPOST" id="Q99KR3"/>
<dbReference type="PaxDb" id="10090-ENSMUSP00000027071"/>
<dbReference type="PeptideAtlas" id="Q99KR3"/>
<dbReference type="ProteomicsDB" id="263694"/>
<dbReference type="Pumba" id="Q99KR3"/>
<dbReference type="Antibodypedia" id="25088">
    <property type="antibodies" value="270 antibodies from 23 providers"/>
</dbReference>
<dbReference type="DNASU" id="212442"/>
<dbReference type="Ensembl" id="ENSMUST00000027071.7">
    <property type="protein sequence ID" value="ENSMUSP00000027071.6"/>
    <property type="gene ID" value="ENSMUSG00000025937.7"/>
</dbReference>
<dbReference type="GeneID" id="212442"/>
<dbReference type="KEGG" id="mmu:212442"/>
<dbReference type="UCSC" id="uc007aiu.2">
    <property type="organism name" value="mouse"/>
</dbReference>
<dbReference type="AGR" id="MGI:2442551"/>
<dbReference type="CTD" id="51110"/>
<dbReference type="MGI" id="MGI:2442551">
    <property type="gene designation" value="Lactb2"/>
</dbReference>
<dbReference type="VEuPathDB" id="HostDB:ENSMUSG00000025937"/>
<dbReference type="eggNOG" id="KOG0813">
    <property type="taxonomic scope" value="Eukaryota"/>
</dbReference>
<dbReference type="GeneTree" id="ENSGT00390000001710"/>
<dbReference type="HOGENOM" id="CLU_048478_1_2_1"/>
<dbReference type="InParanoid" id="Q99KR3"/>
<dbReference type="OMA" id="GDHVMAW"/>
<dbReference type="OrthoDB" id="17458at2759"/>
<dbReference type="PhylomeDB" id="Q99KR3"/>
<dbReference type="TreeFam" id="TF314297"/>
<dbReference type="BioGRID-ORCS" id="212442">
    <property type="hits" value="1 hit in 78 CRISPR screens"/>
</dbReference>
<dbReference type="ChiTaRS" id="Lactb2">
    <property type="organism name" value="mouse"/>
</dbReference>
<dbReference type="PRO" id="PR:Q99KR3"/>
<dbReference type="Proteomes" id="UP000000589">
    <property type="component" value="Chromosome 1"/>
</dbReference>
<dbReference type="RNAct" id="Q99KR3">
    <property type="molecule type" value="protein"/>
</dbReference>
<dbReference type="Bgee" id="ENSMUSG00000025937">
    <property type="expression patterns" value="Expressed in right kidney and 256 other cell types or tissues"/>
</dbReference>
<dbReference type="GO" id="GO:0005759">
    <property type="term" value="C:mitochondrial matrix"/>
    <property type="evidence" value="ECO:0000250"/>
    <property type="project" value="UniProtKB"/>
</dbReference>
<dbReference type="GO" id="GO:0005739">
    <property type="term" value="C:mitochondrion"/>
    <property type="evidence" value="ECO:0007005"/>
    <property type="project" value="MGI"/>
</dbReference>
<dbReference type="GO" id="GO:0004521">
    <property type="term" value="F:RNA endonuclease activity"/>
    <property type="evidence" value="ECO:0000250"/>
    <property type="project" value="UniProtKB"/>
</dbReference>
<dbReference type="GO" id="GO:0003727">
    <property type="term" value="F:single-stranded RNA binding"/>
    <property type="evidence" value="ECO:0000250"/>
    <property type="project" value="UniProtKB"/>
</dbReference>
<dbReference type="GO" id="GO:0008270">
    <property type="term" value="F:zinc ion binding"/>
    <property type="evidence" value="ECO:0000250"/>
    <property type="project" value="UniProtKB"/>
</dbReference>
<dbReference type="CDD" id="cd07722">
    <property type="entry name" value="LACTB2-like_MBL-fold"/>
    <property type="match status" value="1"/>
</dbReference>
<dbReference type="FunFam" id="1.10.10.10:FF:000328">
    <property type="entry name" value="Lactamase beta 2"/>
    <property type="match status" value="1"/>
</dbReference>
<dbReference type="FunFam" id="3.60.15.10:FF:000017">
    <property type="entry name" value="Lactamase beta 2"/>
    <property type="match status" value="1"/>
</dbReference>
<dbReference type="Gene3D" id="3.60.15.10">
    <property type="entry name" value="Ribonuclease Z/Hydroxyacylglutathione hydrolase-like"/>
    <property type="match status" value="1"/>
</dbReference>
<dbReference type="Gene3D" id="1.10.10.10">
    <property type="entry name" value="Winged helix-like DNA-binding domain superfamily/Winged helix DNA-binding domain"/>
    <property type="match status" value="1"/>
</dbReference>
<dbReference type="InterPro" id="IPR047921">
    <property type="entry name" value="LACTB2-like_MBL-fold"/>
</dbReference>
<dbReference type="InterPro" id="IPR041516">
    <property type="entry name" value="LACTB2_WH"/>
</dbReference>
<dbReference type="InterPro" id="IPR001279">
    <property type="entry name" value="Metallo-B-lactamas"/>
</dbReference>
<dbReference type="InterPro" id="IPR036866">
    <property type="entry name" value="RibonucZ/Hydroxyglut_hydro"/>
</dbReference>
<dbReference type="InterPro" id="IPR050662">
    <property type="entry name" value="Sec-metab_biosynth-thioest"/>
</dbReference>
<dbReference type="InterPro" id="IPR036388">
    <property type="entry name" value="WH-like_DNA-bd_sf"/>
</dbReference>
<dbReference type="PANTHER" id="PTHR23131">
    <property type="entry name" value="ENDORIBONUCLEASE LACTB2"/>
    <property type="match status" value="1"/>
</dbReference>
<dbReference type="PANTHER" id="PTHR23131:SF0">
    <property type="entry name" value="ENDORIBONUCLEASE LACTB2"/>
    <property type="match status" value="1"/>
</dbReference>
<dbReference type="Pfam" id="PF17778">
    <property type="entry name" value="BLACT_WH"/>
    <property type="match status" value="1"/>
</dbReference>
<dbReference type="Pfam" id="PF00753">
    <property type="entry name" value="Lactamase_B"/>
    <property type="match status" value="1"/>
</dbReference>
<dbReference type="SMART" id="SM00849">
    <property type="entry name" value="Lactamase_B"/>
    <property type="match status" value="1"/>
</dbReference>
<dbReference type="SUPFAM" id="SSF56281">
    <property type="entry name" value="Metallo-hydrolase/oxidoreductase"/>
    <property type="match status" value="1"/>
</dbReference>
<name>LACB2_MOUSE</name>
<protein>
    <recommendedName>
        <fullName evidence="1">Endoribonuclease LACTB2</fullName>
    </recommendedName>
    <alternativeName>
        <fullName>Beta-lactamase-like protein 2</fullName>
        <ecNumber evidence="1">3.1.27.-</ecNumber>
    </alternativeName>
</protein>
<reference key="1">
    <citation type="journal article" date="2005" name="Science">
        <title>The transcriptional landscape of the mammalian genome.</title>
        <authorList>
            <person name="Carninci P."/>
            <person name="Kasukawa T."/>
            <person name="Katayama S."/>
            <person name="Gough J."/>
            <person name="Frith M.C."/>
            <person name="Maeda N."/>
            <person name="Oyama R."/>
            <person name="Ravasi T."/>
            <person name="Lenhard B."/>
            <person name="Wells C."/>
            <person name="Kodzius R."/>
            <person name="Shimokawa K."/>
            <person name="Bajic V.B."/>
            <person name="Brenner S.E."/>
            <person name="Batalov S."/>
            <person name="Forrest A.R."/>
            <person name="Zavolan M."/>
            <person name="Davis M.J."/>
            <person name="Wilming L.G."/>
            <person name="Aidinis V."/>
            <person name="Allen J.E."/>
            <person name="Ambesi-Impiombato A."/>
            <person name="Apweiler R."/>
            <person name="Aturaliya R.N."/>
            <person name="Bailey T.L."/>
            <person name="Bansal M."/>
            <person name="Baxter L."/>
            <person name="Beisel K.W."/>
            <person name="Bersano T."/>
            <person name="Bono H."/>
            <person name="Chalk A.M."/>
            <person name="Chiu K.P."/>
            <person name="Choudhary V."/>
            <person name="Christoffels A."/>
            <person name="Clutterbuck D.R."/>
            <person name="Crowe M.L."/>
            <person name="Dalla E."/>
            <person name="Dalrymple B.P."/>
            <person name="de Bono B."/>
            <person name="Della Gatta G."/>
            <person name="di Bernardo D."/>
            <person name="Down T."/>
            <person name="Engstrom P."/>
            <person name="Fagiolini M."/>
            <person name="Faulkner G."/>
            <person name="Fletcher C.F."/>
            <person name="Fukushima T."/>
            <person name="Furuno M."/>
            <person name="Futaki S."/>
            <person name="Gariboldi M."/>
            <person name="Georgii-Hemming P."/>
            <person name="Gingeras T.R."/>
            <person name="Gojobori T."/>
            <person name="Green R.E."/>
            <person name="Gustincich S."/>
            <person name="Harbers M."/>
            <person name="Hayashi Y."/>
            <person name="Hensch T.K."/>
            <person name="Hirokawa N."/>
            <person name="Hill D."/>
            <person name="Huminiecki L."/>
            <person name="Iacono M."/>
            <person name="Ikeo K."/>
            <person name="Iwama A."/>
            <person name="Ishikawa T."/>
            <person name="Jakt M."/>
            <person name="Kanapin A."/>
            <person name="Katoh M."/>
            <person name="Kawasawa Y."/>
            <person name="Kelso J."/>
            <person name="Kitamura H."/>
            <person name="Kitano H."/>
            <person name="Kollias G."/>
            <person name="Krishnan S.P."/>
            <person name="Kruger A."/>
            <person name="Kummerfeld S.K."/>
            <person name="Kurochkin I.V."/>
            <person name="Lareau L.F."/>
            <person name="Lazarevic D."/>
            <person name="Lipovich L."/>
            <person name="Liu J."/>
            <person name="Liuni S."/>
            <person name="McWilliam S."/>
            <person name="Madan Babu M."/>
            <person name="Madera M."/>
            <person name="Marchionni L."/>
            <person name="Matsuda H."/>
            <person name="Matsuzawa S."/>
            <person name="Miki H."/>
            <person name="Mignone F."/>
            <person name="Miyake S."/>
            <person name="Morris K."/>
            <person name="Mottagui-Tabar S."/>
            <person name="Mulder N."/>
            <person name="Nakano N."/>
            <person name="Nakauchi H."/>
            <person name="Ng P."/>
            <person name="Nilsson R."/>
            <person name="Nishiguchi S."/>
            <person name="Nishikawa S."/>
            <person name="Nori F."/>
            <person name="Ohara O."/>
            <person name="Okazaki Y."/>
            <person name="Orlando V."/>
            <person name="Pang K.C."/>
            <person name="Pavan W.J."/>
            <person name="Pavesi G."/>
            <person name="Pesole G."/>
            <person name="Petrovsky N."/>
            <person name="Piazza S."/>
            <person name="Reed J."/>
            <person name="Reid J.F."/>
            <person name="Ring B.Z."/>
            <person name="Ringwald M."/>
            <person name="Rost B."/>
            <person name="Ruan Y."/>
            <person name="Salzberg S.L."/>
            <person name="Sandelin A."/>
            <person name="Schneider C."/>
            <person name="Schoenbach C."/>
            <person name="Sekiguchi K."/>
            <person name="Semple C.A."/>
            <person name="Seno S."/>
            <person name="Sessa L."/>
            <person name="Sheng Y."/>
            <person name="Shibata Y."/>
            <person name="Shimada H."/>
            <person name="Shimada K."/>
            <person name="Silva D."/>
            <person name="Sinclair B."/>
            <person name="Sperling S."/>
            <person name="Stupka E."/>
            <person name="Sugiura K."/>
            <person name="Sultana R."/>
            <person name="Takenaka Y."/>
            <person name="Taki K."/>
            <person name="Tammoja K."/>
            <person name="Tan S.L."/>
            <person name="Tang S."/>
            <person name="Taylor M.S."/>
            <person name="Tegner J."/>
            <person name="Teichmann S.A."/>
            <person name="Ueda H.R."/>
            <person name="van Nimwegen E."/>
            <person name="Verardo R."/>
            <person name="Wei C.L."/>
            <person name="Yagi K."/>
            <person name="Yamanishi H."/>
            <person name="Zabarovsky E."/>
            <person name="Zhu S."/>
            <person name="Zimmer A."/>
            <person name="Hide W."/>
            <person name="Bult C."/>
            <person name="Grimmond S.M."/>
            <person name="Teasdale R.D."/>
            <person name="Liu E.T."/>
            <person name="Brusic V."/>
            <person name="Quackenbush J."/>
            <person name="Wahlestedt C."/>
            <person name="Mattick J.S."/>
            <person name="Hume D.A."/>
            <person name="Kai C."/>
            <person name="Sasaki D."/>
            <person name="Tomaru Y."/>
            <person name="Fukuda S."/>
            <person name="Kanamori-Katayama M."/>
            <person name="Suzuki M."/>
            <person name="Aoki J."/>
            <person name="Arakawa T."/>
            <person name="Iida J."/>
            <person name="Imamura K."/>
            <person name="Itoh M."/>
            <person name="Kato T."/>
            <person name="Kawaji H."/>
            <person name="Kawagashira N."/>
            <person name="Kawashima T."/>
            <person name="Kojima M."/>
            <person name="Kondo S."/>
            <person name="Konno H."/>
            <person name="Nakano K."/>
            <person name="Ninomiya N."/>
            <person name="Nishio T."/>
            <person name="Okada M."/>
            <person name="Plessy C."/>
            <person name="Shibata K."/>
            <person name="Shiraki T."/>
            <person name="Suzuki S."/>
            <person name="Tagami M."/>
            <person name="Waki K."/>
            <person name="Watahiki A."/>
            <person name="Okamura-Oho Y."/>
            <person name="Suzuki H."/>
            <person name="Kawai J."/>
            <person name="Hayashizaki Y."/>
        </authorList>
    </citation>
    <scope>NUCLEOTIDE SEQUENCE [LARGE SCALE MRNA]</scope>
    <source>
        <strain>C57BL/6J</strain>
        <strain>NOD</strain>
        <tissue>Kidney</tissue>
        <tissue>Thymus</tissue>
    </source>
</reference>
<reference key="2">
    <citation type="journal article" date="2004" name="Genome Res.">
        <title>The status, quality, and expansion of the NIH full-length cDNA project: the Mammalian Gene Collection (MGC).</title>
        <authorList>
            <consortium name="The MGC Project Team"/>
        </authorList>
    </citation>
    <scope>NUCLEOTIDE SEQUENCE [LARGE SCALE MRNA]</scope>
    <source>
        <strain>FVB/N</strain>
        <tissue>Mammary tumor</tissue>
    </source>
</reference>
<reference key="3">
    <citation type="journal article" date="2010" name="Cell">
        <title>A tissue-specific atlas of mouse protein phosphorylation and expression.</title>
        <authorList>
            <person name="Huttlin E.L."/>
            <person name="Jedrychowski M.P."/>
            <person name="Elias J.E."/>
            <person name="Goswami T."/>
            <person name="Rad R."/>
            <person name="Beausoleil S.A."/>
            <person name="Villen J."/>
            <person name="Haas W."/>
            <person name="Sowa M.E."/>
            <person name="Gygi S.P."/>
        </authorList>
    </citation>
    <scope>PHOSPHORYLATION [LARGE SCALE ANALYSIS] AT SER-235</scope>
    <scope>IDENTIFICATION BY MASS SPECTROMETRY [LARGE SCALE ANALYSIS]</scope>
    <source>
        <tissue>Brain</tissue>
        <tissue>Brown adipose tissue</tissue>
        <tissue>Heart</tissue>
        <tissue>Kidney</tissue>
        <tissue>Liver</tissue>
        <tissue>Lung</tissue>
        <tissue>Pancreas</tissue>
        <tissue>Spleen</tissue>
        <tissue>Testis</tissue>
    </source>
</reference>
<reference key="4">
    <citation type="journal article" date="2013" name="Mol. Cell">
        <title>SIRT5-mediated lysine desuccinylation impacts diverse metabolic pathways.</title>
        <authorList>
            <person name="Park J."/>
            <person name="Chen Y."/>
            <person name="Tishkoff D.X."/>
            <person name="Peng C."/>
            <person name="Tan M."/>
            <person name="Dai L."/>
            <person name="Xie Z."/>
            <person name="Zhang Y."/>
            <person name="Zwaans B.M."/>
            <person name="Skinner M.E."/>
            <person name="Lombard D.B."/>
            <person name="Zhao Y."/>
        </authorList>
    </citation>
    <scope>SUCCINYLATION [LARGE SCALE ANALYSIS] AT LYS-273</scope>
    <scope>IDENTIFICATION BY MASS SPECTROMETRY [LARGE SCALE ANALYSIS]</scope>
    <source>
        <tissue>Liver</tissue>
    </source>
</reference>
<reference key="5">
    <citation type="journal article" date="2013" name="Proc. Natl. Acad. Sci. U.S.A.">
        <title>Label-free quantitative proteomics of the lysine acetylome in mitochondria identifies substrates of SIRT3 in metabolic pathways.</title>
        <authorList>
            <person name="Rardin M.J."/>
            <person name="Newman J.C."/>
            <person name="Held J.M."/>
            <person name="Cusack M.P."/>
            <person name="Sorensen D.J."/>
            <person name="Li B."/>
            <person name="Schilling B."/>
            <person name="Mooney S.D."/>
            <person name="Kahn C.R."/>
            <person name="Verdin E."/>
            <person name="Gibson B.W."/>
        </authorList>
    </citation>
    <scope>ACETYLATION [LARGE SCALE ANALYSIS] AT LYS-102 AND LYS-282</scope>
    <scope>IDENTIFICATION BY MASS SPECTROMETRY [LARGE SCALE ANALYSIS]</scope>
    <source>
        <tissue>Liver</tissue>
    </source>
</reference>
<organism>
    <name type="scientific">Mus musculus</name>
    <name type="common">Mouse</name>
    <dbReference type="NCBI Taxonomy" id="10090"/>
    <lineage>
        <taxon>Eukaryota</taxon>
        <taxon>Metazoa</taxon>
        <taxon>Chordata</taxon>
        <taxon>Craniata</taxon>
        <taxon>Vertebrata</taxon>
        <taxon>Euteleostomi</taxon>
        <taxon>Mammalia</taxon>
        <taxon>Eutheria</taxon>
        <taxon>Euarchontoglires</taxon>
        <taxon>Glires</taxon>
        <taxon>Rodentia</taxon>
        <taxon>Myomorpha</taxon>
        <taxon>Muroidea</taxon>
        <taxon>Muridae</taxon>
        <taxon>Murinae</taxon>
        <taxon>Mus</taxon>
        <taxon>Mus</taxon>
    </lineage>
</organism>
<proteinExistence type="evidence at protein level"/>
<feature type="chain" id="PRO_0000315744" description="Endoribonuclease LACTB2">
    <location>
        <begin position="1"/>
        <end position="288"/>
    </location>
</feature>
<feature type="binding site" evidence="1">
    <location>
        <position position="77"/>
    </location>
    <ligand>
        <name>Zn(2+)</name>
        <dbReference type="ChEBI" id="CHEBI:29105"/>
        <label>1</label>
    </ligand>
</feature>
<feature type="binding site" evidence="1">
    <location>
        <position position="79"/>
    </location>
    <ligand>
        <name>Zn(2+)</name>
        <dbReference type="ChEBI" id="CHEBI:29105"/>
        <label>1</label>
    </ligand>
</feature>
<feature type="binding site" evidence="1">
    <location>
        <position position="81"/>
    </location>
    <ligand>
        <name>Zn(2+)</name>
        <dbReference type="ChEBI" id="CHEBI:29105"/>
        <label>2</label>
    </ligand>
</feature>
<feature type="binding site" evidence="1">
    <location>
        <position position="82"/>
    </location>
    <ligand>
        <name>Zn(2+)</name>
        <dbReference type="ChEBI" id="CHEBI:29105"/>
        <label>2</label>
    </ligand>
</feature>
<feature type="binding site" evidence="1">
    <location>
        <position position="118"/>
    </location>
    <ligand>
        <name>Zn(2+)</name>
        <dbReference type="ChEBI" id="CHEBI:29105"/>
        <label>1</label>
    </ligand>
</feature>
<feature type="binding site" evidence="1">
    <location>
        <position position="118"/>
    </location>
    <ligand>
        <name>Zn(2+)</name>
        <dbReference type="ChEBI" id="CHEBI:29105"/>
        <label>2</label>
    </ligand>
</feature>
<feature type="binding site" evidence="1">
    <location>
        <position position="145"/>
    </location>
    <ligand>
        <name>Zn(2+)</name>
        <dbReference type="ChEBI" id="CHEBI:29105"/>
        <label>1</label>
    </ligand>
</feature>
<feature type="binding site" evidence="1">
    <location>
        <position position="164"/>
    </location>
    <ligand>
        <name>Zn(2+)</name>
        <dbReference type="ChEBI" id="CHEBI:29105"/>
        <label>1</label>
    </ligand>
</feature>
<feature type="binding site" evidence="1">
    <location>
        <position position="164"/>
    </location>
    <ligand>
        <name>Zn(2+)</name>
        <dbReference type="ChEBI" id="CHEBI:29105"/>
        <label>2</label>
    </ligand>
</feature>
<feature type="binding site" evidence="1">
    <location>
        <position position="199"/>
    </location>
    <ligand>
        <name>Zn(2+)</name>
        <dbReference type="ChEBI" id="CHEBI:29105"/>
        <label>2</label>
    </ligand>
</feature>
<feature type="modified residue" description="N6-acetyllysine" evidence="4">
    <location>
        <position position="102"/>
    </location>
</feature>
<feature type="modified residue" description="Phosphoserine" evidence="3">
    <location>
        <position position="235"/>
    </location>
</feature>
<feature type="modified residue" description="N6-succinyllysine" evidence="5">
    <location>
        <position position="273"/>
    </location>
</feature>
<feature type="modified residue" description="N6-acetyllysine" evidence="4">
    <location>
        <position position="282"/>
    </location>
</feature>
<keyword id="KW-0007">Acetylation</keyword>
<keyword id="KW-0255">Endonuclease</keyword>
<keyword id="KW-0378">Hydrolase</keyword>
<keyword id="KW-0479">Metal-binding</keyword>
<keyword id="KW-0496">Mitochondrion</keyword>
<keyword id="KW-0540">Nuclease</keyword>
<keyword id="KW-0597">Phosphoprotein</keyword>
<keyword id="KW-1185">Reference proteome</keyword>
<keyword id="KW-0694">RNA-binding</keyword>
<keyword id="KW-0862">Zinc</keyword>
<evidence type="ECO:0000250" key="1">
    <source>
        <dbReference type="UniProtKB" id="Q53H82"/>
    </source>
</evidence>
<evidence type="ECO:0000305" key="2"/>
<evidence type="ECO:0007744" key="3">
    <source>
    </source>
</evidence>
<evidence type="ECO:0007744" key="4">
    <source>
    </source>
</evidence>
<evidence type="ECO:0007744" key="5">
    <source>
    </source>
</evidence>
<comment type="function">
    <text evidence="1">Endoribonuclease; cleaves preferentially 3' to purine-pyrimidine dinucleotide motifs in single-stranded RNA. The cleavage product contains a free 3' -OH group. Has no activity with double-stranded RNA or DNA. Required for normal mitochondrial function and cell viability.</text>
</comment>
<comment type="cofactor">
    <cofactor evidence="1">
        <name>Zn(2+)</name>
        <dbReference type="ChEBI" id="CHEBI:29105"/>
    </cofactor>
    <text evidence="1">Binds 2 Zn(2+) ions per subunit.</text>
</comment>
<comment type="subunit">
    <text evidence="1">Monomer.</text>
</comment>
<comment type="subcellular location">
    <subcellularLocation>
        <location evidence="1">Mitochondrion matrix</location>
    </subcellularLocation>
</comment>
<comment type="similarity">
    <text evidence="2">Belongs to the metallo-beta-lactamase superfamily. Glyoxalase II family.</text>
</comment>